<gene>
    <name type="ordered locus">Rv1271c</name>
    <name type="ORF">MTCY50.11</name>
</gene>
<proteinExistence type="inferred from homology"/>
<dbReference type="EMBL" id="AL123456">
    <property type="protein sequence ID" value="CCP44027.1"/>
    <property type="molecule type" value="Genomic_DNA"/>
</dbReference>
<dbReference type="PIR" id="G70754">
    <property type="entry name" value="G70754"/>
</dbReference>
<dbReference type="RefSeq" id="NP_215787.1">
    <property type="nucleotide sequence ID" value="NC_000962.3"/>
</dbReference>
<dbReference type="RefSeq" id="WP_003406566.1">
    <property type="nucleotide sequence ID" value="NZ_NVQJ01000030.1"/>
</dbReference>
<dbReference type="SMR" id="P9WM43"/>
<dbReference type="STRING" id="83332.Rv1271c"/>
<dbReference type="PaxDb" id="83332-Rv1271c"/>
<dbReference type="DNASU" id="887019"/>
<dbReference type="GeneID" id="887019"/>
<dbReference type="KEGG" id="mtu:Rv1271c"/>
<dbReference type="KEGG" id="mtv:RVBD_1271c"/>
<dbReference type="TubercuList" id="Rv1271c"/>
<dbReference type="eggNOG" id="ENOG5031MN4">
    <property type="taxonomic scope" value="Bacteria"/>
</dbReference>
<dbReference type="InParanoid" id="P9WM43"/>
<dbReference type="OrthoDB" id="4750613at2"/>
<dbReference type="PhylomeDB" id="P9WM43"/>
<dbReference type="Proteomes" id="UP000001584">
    <property type="component" value="Chromosome"/>
</dbReference>
<dbReference type="InterPro" id="IPR007969">
    <property type="entry name" value="DUF732"/>
</dbReference>
<dbReference type="Pfam" id="PF05305">
    <property type="entry name" value="DUF732"/>
    <property type="match status" value="1"/>
</dbReference>
<evidence type="ECO:0000255" key="1"/>
<evidence type="ECO:0000305" key="2"/>
<protein>
    <recommendedName>
        <fullName>Uncharacterized protein Rv1271c</fullName>
    </recommendedName>
</protein>
<organism>
    <name type="scientific">Mycobacterium tuberculosis (strain ATCC 25618 / H37Rv)</name>
    <dbReference type="NCBI Taxonomy" id="83332"/>
    <lineage>
        <taxon>Bacteria</taxon>
        <taxon>Bacillati</taxon>
        <taxon>Actinomycetota</taxon>
        <taxon>Actinomycetes</taxon>
        <taxon>Mycobacteriales</taxon>
        <taxon>Mycobacteriaceae</taxon>
        <taxon>Mycobacterium</taxon>
        <taxon>Mycobacterium tuberculosis complex</taxon>
    </lineage>
</organism>
<feature type="signal peptide" evidence="1">
    <location>
        <begin position="1"/>
        <end position="19"/>
    </location>
</feature>
<feature type="chain" id="PRO_0000014091" description="Uncharacterized protein Rv1271c">
    <location>
        <begin position="20"/>
        <end position="113"/>
    </location>
</feature>
<reference key="1">
    <citation type="journal article" date="1998" name="Nature">
        <title>Deciphering the biology of Mycobacterium tuberculosis from the complete genome sequence.</title>
        <authorList>
            <person name="Cole S.T."/>
            <person name="Brosch R."/>
            <person name="Parkhill J."/>
            <person name="Garnier T."/>
            <person name="Churcher C.M."/>
            <person name="Harris D.E."/>
            <person name="Gordon S.V."/>
            <person name="Eiglmeier K."/>
            <person name="Gas S."/>
            <person name="Barry C.E. III"/>
            <person name="Tekaia F."/>
            <person name="Badcock K."/>
            <person name="Basham D."/>
            <person name="Brown D."/>
            <person name="Chillingworth T."/>
            <person name="Connor R."/>
            <person name="Davies R.M."/>
            <person name="Devlin K."/>
            <person name="Feltwell T."/>
            <person name="Gentles S."/>
            <person name="Hamlin N."/>
            <person name="Holroyd S."/>
            <person name="Hornsby T."/>
            <person name="Jagels K."/>
            <person name="Krogh A."/>
            <person name="McLean J."/>
            <person name="Moule S."/>
            <person name="Murphy L.D."/>
            <person name="Oliver S."/>
            <person name="Osborne J."/>
            <person name="Quail M.A."/>
            <person name="Rajandream M.A."/>
            <person name="Rogers J."/>
            <person name="Rutter S."/>
            <person name="Seeger K."/>
            <person name="Skelton S."/>
            <person name="Squares S."/>
            <person name="Squares R."/>
            <person name="Sulston J.E."/>
            <person name="Taylor K."/>
            <person name="Whitehead S."/>
            <person name="Barrell B.G."/>
        </authorList>
    </citation>
    <scope>NUCLEOTIDE SEQUENCE [LARGE SCALE GENOMIC DNA]</scope>
    <source>
        <strain>ATCC 25618 / H37Rv</strain>
    </source>
</reference>
<keyword id="KW-1185">Reference proteome</keyword>
<keyword id="KW-0732">Signal</keyword>
<comment type="similarity">
    <text evidence="2">To M.tuberculosis Rv1291c.</text>
</comment>
<sequence length="113" mass="11589">MLSPLSPRIIAAFTTAVGAAAIGLAVATAGTAGANTKDEAFIAQMESIGVTFSSPQVATQQAQLVCKKLASGETGTEIAEEVLSQTNLTTKQAAYFVVDATKAYCPQYASQLT</sequence>
<name>Y1271_MYCTU</name>
<accession>P9WM43</accession>
<accession>L0T6D4</accession>
<accession>P64793</accession>
<accession>Q11048</accession>